<organism>
    <name type="scientific">Dictyostelium discoideum</name>
    <name type="common">Social amoeba</name>
    <dbReference type="NCBI Taxonomy" id="44689"/>
    <lineage>
        <taxon>Eukaryota</taxon>
        <taxon>Amoebozoa</taxon>
        <taxon>Evosea</taxon>
        <taxon>Eumycetozoa</taxon>
        <taxon>Dictyostelia</taxon>
        <taxon>Dictyosteliales</taxon>
        <taxon>Dictyosteliaceae</taxon>
        <taxon>Dictyostelium</taxon>
    </lineage>
</organism>
<dbReference type="EMBL" id="AAFI02000175">
    <property type="protein sequence ID" value="EAL61848.1"/>
    <property type="molecule type" value="Genomic_DNA"/>
</dbReference>
<dbReference type="RefSeq" id="XP_635348.1">
    <property type="nucleotide sequence ID" value="XM_630256.1"/>
</dbReference>
<dbReference type="SMR" id="Q54F42"/>
<dbReference type="FunCoup" id="Q54F42">
    <property type="interactions" value="312"/>
</dbReference>
<dbReference type="STRING" id="44689.Q54F42"/>
<dbReference type="PaxDb" id="44689-DDB0233241"/>
<dbReference type="EnsemblProtists" id="EAL61848">
    <property type="protein sequence ID" value="EAL61848"/>
    <property type="gene ID" value="DDB_G0291129"/>
</dbReference>
<dbReference type="GeneID" id="8627996"/>
<dbReference type="KEGG" id="ddi:DDB_G0291129"/>
<dbReference type="dictyBase" id="DDB_G0291129">
    <property type="gene designation" value="ndufa6"/>
</dbReference>
<dbReference type="VEuPathDB" id="AmoebaDB:DDB_G0291129"/>
<dbReference type="eggNOG" id="KOG3426">
    <property type="taxonomic scope" value="Eukaryota"/>
</dbReference>
<dbReference type="HOGENOM" id="CLU_2008226_0_0_1"/>
<dbReference type="InParanoid" id="Q54F42"/>
<dbReference type="OMA" id="RSHVVNY"/>
<dbReference type="PhylomeDB" id="Q54F42"/>
<dbReference type="PRO" id="PR:Q54F42"/>
<dbReference type="Proteomes" id="UP000002195">
    <property type="component" value="Chromosome 5"/>
</dbReference>
<dbReference type="GO" id="GO:0005743">
    <property type="term" value="C:mitochondrial inner membrane"/>
    <property type="evidence" value="ECO:0007669"/>
    <property type="project" value="UniProtKB-SubCell"/>
</dbReference>
<dbReference type="GO" id="GO:0031966">
    <property type="term" value="C:mitochondrial membrane"/>
    <property type="evidence" value="ECO:0000250"/>
    <property type="project" value="UniProtKB"/>
</dbReference>
<dbReference type="GO" id="GO:0005739">
    <property type="term" value="C:mitochondrion"/>
    <property type="evidence" value="ECO:0000250"/>
    <property type="project" value="dictyBase"/>
</dbReference>
<dbReference type="GO" id="GO:0045271">
    <property type="term" value="C:respiratory chain complex I"/>
    <property type="evidence" value="ECO:0000250"/>
    <property type="project" value="UniProtKB"/>
</dbReference>
<dbReference type="InterPro" id="IPR016488">
    <property type="entry name" value="NADH_Ub_cplx-1_asu_su-6"/>
</dbReference>
<dbReference type="PANTHER" id="PTHR12964:SF0">
    <property type="entry name" value="NADH DEHYDROGENASE [UBIQUINONE] 1 ALPHA SUBCOMPLEX SUBUNIT 6"/>
    <property type="match status" value="1"/>
</dbReference>
<dbReference type="PANTHER" id="PTHR12964">
    <property type="entry name" value="NADH-UBIQUINONE OXIDOREDUCTASE B14 SUBUNIT"/>
    <property type="match status" value="1"/>
</dbReference>
<comment type="function">
    <text evidence="1">Accessory subunit of the mitochondrial membrane respiratory chain NADH dehydrogenase (Complex I), that is believed to be not involved in catalysis. Complex I functions in the transfer of electrons from NADH to the respiratory chain. The immediate electron acceptor for the enzyme is believed to be ubiquinone (By similarity).</text>
</comment>
<comment type="subcellular location">
    <subcellularLocation>
        <location>Mitochondrion inner membrane</location>
        <topology>Peripheral membrane protein</topology>
        <orientation>Matrix side</orientation>
    </subcellularLocation>
</comment>
<comment type="similarity">
    <text evidence="2">Belongs to the complex I LYR family.</text>
</comment>
<sequence>MSSNMQAMKQMRPALVSLTQQQARRRCFKLYRNCIRSIPHLIQHYNLSYNMSEMRNRFRSNFVEFEEVTEKNQLDRLAFIGETELFDAMSLLKTRSHVVNYFDTQPVNAKTISESEKLLNNFFE</sequence>
<proteinExistence type="inferred from homology"/>
<name>NDUA6_DICDI</name>
<reference key="1">
    <citation type="journal article" date="2005" name="Nature">
        <title>The genome of the social amoeba Dictyostelium discoideum.</title>
        <authorList>
            <person name="Eichinger L."/>
            <person name="Pachebat J.A."/>
            <person name="Gloeckner G."/>
            <person name="Rajandream M.A."/>
            <person name="Sucgang R."/>
            <person name="Berriman M."/>
            <person name="Song J."/>
            <person name="Olsen R."/>
            <person name="Szafranski K."/>
            <person name="Xu Q."/>
            <person name="Tunggal B."/>
            <person name="Kummerfeld S."/>
            <person name="Madera M."/>
            <person name="Konfortov B.A."/>
            <person name="Rivero F."/>
            <person name="Bankier A.T."/>
            <person name="Lehmann R."/>
            <person name="Hamlin N."/>
            <person name="Davies R."/>
            <person name="Gaudet P."/>
            <person name="Fey P."/>
            <person name="Pilcher K."/>
            <person name="Chen G."/>
            <person name="Saunders D."/>
            <person name="Sodergren E.J."/>
            <person name="Davis P."/>
            <person name="Kerhornou A."/>
            <person name="Nie X."/>
            <person name="Hall N."/>
            <person name="Anjard C."/>
            <person name="Hemphill L."/>
            <person name="Bason N."/>
            <person name="Farbrother P."/>
            <person name="Desany B."/>
            <person name="Just E."/>
            <person name="Morio T."/>
            <person name="Rost R."/>
            <person name="Churcher C.M."/>
            <person name="Cooper J."/>
            <person name="Haydock S."/>
            <person name="van Driessche N."/>
            <person name="Cronin A."/>
            <person name="Goodhead I."/>
            <person name="Muzny D.M."/>
            <person name="Mourier T."/>
            <person name="Pain A."/>
            <person name="Lu M."/>
            <person name="Harper D."/>
            <person name="Lindsay R."/>
            <person name="Hauser H."/>
            <person name="James K.D."/>
            <person name="Quiles M."/>
            <person name="Madan Babu M."/>
            <person name="Saito T."/>
            <person name="Buchrieser C."/>
            <person name="Wardroper A."/>
            <person name="Felder M."/>
            <person name="Thangavelu M."/>
            <person name="Johnson D."/>
            <person name="Knights A."/>
            <person name="Loulseged H."/>
            <person name="Mungall K.L."/>
            <person name="Oliver K."/>
            <person name="Price C."/>
            <person name="Quail M.A."/>
            <person name="Urushihara H."/>
            <person name="Hernandez J."/>
            <person name="Rabbinowitsch E."/>
            <person name="Steffen D."/>
            <person name="Sanders M."/>
            <person name="Ma J."/>
            <person name="Kohara Y."/>
            <person name="Sharp S."/>
            <person name="Simmonds M.N."/>
            <person name="Spiegler S."/>
            <person name="Tivey A."/>
            <person name="Sugano S."/>
            <person name="White B."/>
            <person name="Walker D."/>
            <person name="Woodward J.R."/>
            <person name="Winckler T."/>
            <person name="Tanaka Y."/>
            <person name="Shaulsky G."/>
            <person name="Schleicher M."/>
            <person name="Weinstock G.M."/>
            <person name="Rosenthal A."/>
            <person name="Cox E.C."/>
            <person name="Chisholm R.L."/>
            <person name="Gibbs R.A."/>
            <person name="Loomis W.F."/>
            <person name="Platzer M."/>
            <person name="Kay R.R."/>
            <person name="Williams J.G."/>
            <person name="Dear P.H."/>
            <person name="Noegel A.A."/>
            <person name="Barrell B.G."/>
            <person name="Kuspa A."/>
        </authorList>
    </citation>
    <scope>NUCLEOTIDE SEQUENCE [LARGE SCALE GENOMIC DNA]</scope>
    <source>
        <strain>AX4</strain>
    </source>
</reference>
<protein>
    <recommendedName>
        <fullName>NADH dehydrogenase [ubiquinone] 1 alpha subcomplex subunit 6</fullName>
    </recommendedName>
</protein>
<feature type="chain" id="PRO_0000327576" description="NADH dehydrogenase [ubiquinone] 1 alpha subcomplex subunit 6">
    <location>
        <begin position="1"/>
        <end position="124"/>
    </location>
</feature>
<evidence type="ECO:0000250" key="1"/>
<evidence type="ECO:0000305" key="2"/>
<accession>Q54F42</accession>
<gene>
    <name type="primary">ndufa6</name>
    <name type="ORF">DDB_G0291129</name>
</gene>
<keyword id="KW-0249">Electron transport</keyword>
<keyword id="KW-0472">Membrane</keyword>
<keyword id="KW-0496">Mitochondrion</keyword>
<keyword id="KW-0999">Mitochondrion inner membrane</keyword>
<keyword id="KW-1185">Reference proteome</keyword>
<keyword id="KW-0679">Respiratory chain</keyword>
<keyword id="KW-0813">Transport</keyword>